<gene>
    <name evidence="1" type="primary">fmt</name>
    <name type="ordered locus">P9515_09171</name>
</gene>
<organism>
    <name type="scientific">Prochlorococcus marinus (strain MIT 9515)</name>
    <dbReference type="NCBI Taxonomy" id="167542"/>
    <lineage>
        <taxon>Bacteria</taxon>
        <taxon>Bacillati</taxon>
        <taxon>Cyanobacteriota</taxon>
        <taxon>Cyanophyceae</taxon>
        <taxon>Synechococcales</taxon>
        <taxon>Prochlorococcaceae</taxon>
        <taxon>Prochlorococcus</taxon>
    </lineage>
</organism>
<sequence length="328" mass="37692">MRIIFWGTPEYSVKSLEVLKKSDHEILAVITQPDKKRSRGNKLIASPVKQYAMKEGLPVFTPETLKKNDHFISLLKEFSCDLFVVIAYGKILPKKILDIPKYKSWNAHASLLPRWRGAAPIQWSILEGDDFTGVGIMRMEEGLDTGDVLVEKQIKIEKEDNLQTLTKKLSDLSSELLLKAISKIEQNKNKDINHLLKKQKDLQRKLKYARMINKSDYIIDWANNSTDIYRKINALYPRVSTTFKKKNLKIIKIKILTTDEIQNKNYKIVSDKFKPGYVIGLIENKGIIISTKTDPILLLEAKLEGKNISKQKQLLQQLNPLIGEKFSD</sequence>
<reference key="1">
    <citation type="journal article" date="2007" name="PLoS Genet.">
        <title>Patterns and implications of gene gain and loss in the evolution of Prochlorococcus.</title>
        <authorList>
            <person name="Kettler G.C."/>
            <person name="Martiny A.C."/>
            <person name="Huang K."/>
            <person name="Zucker J."/>
            <person name="Coleman M.L."/>
            <person name="Rodrigue S."/>
            <person name="Chen F."/>
            <person name="Lapidus A."/>
            <person name="Ferriera S."/>
            <person name="Johnson J."/>
            <person name="Steglich C."/>
            <person name="Church G.M."/>
            <person name="Richardson P."/>
            <person name="Chisholm S.W."/>
        </authorList>
    </citation>
    <scope>NUCLEOTIDE SEQUENCE [LARGE SCALE GENOMIC DNA]</scope>
    <source>
        <strain>MIT 9515</strain>
    </source>
</reference>
<accession>A2BWG3</accession>
<evidence type="ECO:0000255" key="1">
    <source>
        <dbReference type="HAMAP-Rule" id="MF_00182"/>
    </source>
</evidence>
<name>FMT_PROM5</name>
<keyword id="KW-0648">Protein biosynthesis</keyword>
<keyword id="KW-0808">Transferase</keyword>
<dbReference type="EC" id="2.1.2.9" evidence="1"/>
<dbReference type="EMBL" id="CP000552">
    <property type="protein sequence ID" value="ABM72124.1"/>
    <property type="molecule type" value="Genomic_DNA"/>
</dbReference>
<dbReference type="RefSeq" id="WP_011820228.1">
    <property type="nucleotide sequence ID" value="NC_008817.1"/>
</dbReference>
<dbReference type="SMR" id="A2BWG3"/>
<dbReference type="STRING" id="167542.P9515_09171"/>
<dbReference type="GeneID" id="60202050"/>
<dbReference type="KEGG" id="pmc:P9515_09171"/>
<dbReference type="eggNOG" id="COG0223">
    <property type="taxonomic scope" value="Bacteria"/>
</dbReference>
<dbReference type="HOGENOM" id="CLU_033347_1_1_3"/>
<dbReference type="OrthoDB" id="9802815at2"/>
<dbReference type="Proteomes" id="UP000001589">
    <property type="component" value="Chromosome"/>
</dbReference>
<dbReference type="GO" id="GO:0005829">
    <property type="term" value="C:cytosol"/>
    <property type="evidence" value="ECO:0007669"/>
    <property type="project" value="TreeGrafter"/>
</dbReference>
<dbReference type="GO" id="GO:0004479">
    <property type="term" value="F:methionyl-tRNA formyltransferase activity"/>
    <property type="evidence" value="ECO:0007669"/>
    <property type="project" value="UniProtKB-UniRule"/>
</dbReference>
<dbReference type="CDD" id="cd08646">
    <property type="entry name" value="FMT_core_Met-tRNA-FMT_N"/>
    <property type="match status" value="1"/>
</dbReference>
<dbReference type="Gene3D" id="3.40.50.12230">
    <property type="match status" value="1"/>
</dbReference>
<dbReference type="HAMAP" id="MF_00182">
    <property type="entry name" value="Formyl_trans"/>
    <property type="match status" value="1"/>
</dbReference>
<dbReference type="InterPro" id="IPR005794">
    <property type="entry name" value="Fmt"/>
</dbReference>
<dbReference type="InterPro" id="IPR005793">
    <property type="entry name" value="Formyl_trans_C"/>
</dbReference>
<dbReference type="InterPro" id="IPR002376">
    <property type="entry name" value="Formyl_transf_N"/>
</dbReference>
<dbReference type="InterPro" id="IPR036477">
    <property type="entry name" value="Formyl_transf_N_sf"/>
</dbReference>
<dbReference type="InterPro" id="IPR011034">
    <property type="entry name" value="Formyl_transferase-like_C_sf"/>
</dbReference>
<dbReference type="InterPro" id="IPR041711">
    <property type="entry name" value="Met-tRNA-FMT_N"/>
</dbReference>
<dbReference type="NCBIfam" id="TIGR00460">
    <property type="entry name" value="fmt"/>
    <property type="match status" value="1"/>
</dbReference>
<dbReference type="PANTHER" id="PTHR11138">
    <property type="entry name" value="METHIONYL-TRNA FORMYLTRANSFERASE"/>
    <property type="match status" value="1"/>
</dbReference>
<dbReference type="PANTHER" id="PTHR11138:SF5">
    <property type="entry name" value="METHIONYL-TRNA FORMYLTRANSFERASE, MITOCHONDRIAL"/>
    <property type="match status" value="1"/>
</dbReference>
<dbReference type="Pfam" id="PF02911">
    <property type="entry name" value="Formyl_trans_C"/>
    <property type="match status" value="1"/>
</dbReference>
<dbReference type="Pfam" id="PF00551">
    <property type="entry name" value="Formyl_trans_N"/>
    <property type="match status" value="1"/>
</dbReference>
<dbReference type="SUPFAM" id="SSF50486">
    <property type="entry name" value="FMT C-terminal domain-like"/>
    <property type="match status" value="1"/>
</dbReference>
<dbReference type="SUPFAM" id="SSF53328">
    <property type="entry name" value="Formyltransferase"/>
    <property type="match status" value="1"/>
</dbReference>
<comment type="function">
    <text evidence="1">Attaches a formyl group to the free amino group of methionyl-tRNA(fMet). The formyl group appears to play a dual role in the initiator identity of N-formylmethionyl-tRNA by promoting its recognition by IF2 and preventing the misappropriation of this tRNA by the elongation apparatus.</text>
</comment>
<comment type="catalytic activity">
    <reaction evidence="1">
        <text>L-methionyl-tRNA(fMet) + (6R)-10-formyltetrahydrofolate = N-formyl-L-methionyl-tRNA(fMet) + (6S)-5,6,7,8-tetrahydrofolate + H(+)</text>
        <dbReference type="Rhea" id="RHEA:24380"/>
        <dbReference type="Rhea" id="RHEA-COMP:9952"/>
        <dbReference type="Rhea" id="RHEA-COMP:9953"/>
        <dbReference type="ChEBI" id="CHEBI:15378"/>
        <dbReference type="ChEBI" id="CHEBI:57453"/>
        <dbReference type="ChEBI" id="CHEBI:78530"/>
        <dbReference type="ChEBI" id="CHEBI:78844"/>
        <dbReference type="ChEBI" id="CHEBI:195366"/>
        <dbReference type="EC" id="2.1.2.9"/>
    </reaction>
</comment>
<comment type="similarity">
    <text evidence="1">Belongs to the Fmt family.</text>
</comment>
<protein>
    <recommendedName>
        <fullName evidence="1">Methionyl-tRNA formyltransferase</fullName>
        <ecNumber evidence="1">2.1.2.9</ecNumber>
    </recommendedName>
</protein>
<feature type="chain" id="PRO_1000020124" description="Methionyl-tRNA formyltransferase">
    <location>
        <begin position="1"/>
        <end position="328"/>
    </location>
</feature>
<feature type="binding site" evidence="1">
    <location>
        <begin position="110"/>
        <end position="113"/>
    </location>
    <ligand>
        <name>(6S)-5,6,7,8-tetrahydrofolate</name>
        <dbReference type="ChEBI" id="CHEBI:57453"/>
    </ligand>
</feature>
<proteinExistence type="inferred from homology"/>